<accession>P05981</accession>
<accession>B2RDS4</accession>
<reference key="1">
    <citation type="journal article" date="1988" name="Biochemistry">
        <title>A novel trypsin-like serine protease (hepsin) with a putative transmembrane domain expressed by human liver and hepatoma cells.</title>
        <authorList>
            <person name="Leytus S.P."/>
            <person name="Loeb K.R."/>
            <person name="Hagen F.S."/>
            <person name="Kurachi K."/>
            <person name="Davie E.W."/>
        </authorList>
    </citation>
    <scope>NUCLEOTIDE SEQUENCE [MRNA]</scope>
    <source>
        <tissue>Liver</tissue>
    </source>
</reference>
<reference key="2">
    <citation type="journal article" date="2004" name="Nat. Genet.">
        <title>Complete sequencing and characterization of 21,243 full-length human cDNAs.</title>
        <authorList>
            <person name="Ota T."/>
            <person name="Suzuki Y."/>
            <person name="Nishikawa T."/>
            <person name="Otsuki T."/>
            <person name="Sugiyama T."/>
            <person name="Irie R."/>
            <person name="Wakamatsu A."/>
            <person name="Hayashi K."/>
            <person name="Sato H."/>
            <person name="Nagai K."/>
            <person name="Kimura K."/>
            <person name="Makita H."/>
            <person name="Sekine M."/>
            <person name="Obayashi M."/>
            <person name="Nishi T."/>
            <person name="Shibahara T."/>
            <person name="Tanaka T."/>
            <person name="Ishii S."/>
            <person name="Yamamoto J."/>
            <person name="Saito K."/>
            <person name="Kawai Y."/>
            <person name="Isono Y."/>
            <person name="Nakamura Y."/>
            <person name="Nagahari K."/>
            <person name="Murakami K."/>
            <person name="Yasuda T."/>
            <person name="Iwayanagi T."/>
            <person name="Wagatsuma M."/>
            <person name="Shiratori A."/>
            <person name="Sudo H."/>
            <person name="Hosoiri T."/>
            <person name="Kaku Y."/>
            <person name="Kodaira H."/>
            <person name="Kondo H."/>
            <person name="Sugawara M."/>
            <person name="Takahashi M."/>
            <person name="Kanda K."/>
            <person name="Yokoi T."/>
            <person name="Furuya T."/>
            <person name="Kikkawa E."/>
            <person name="Omura Y."/>
            <person name="Abe K."/>
            <person name="Kamihara K."/>
            <person name="Katsuta N."/>
            <person name="Sato K."/>
            <person name="Tanikawa M."/>
            <person name="Yamazaki M."/>
            <person name="Ninomiya K."/>
            <person name="Ishibashi T."/>
            <person name="Yamashita H."/>
            <person name="Murakawa K."/>
            <person name="Fujimori K."/>
            <person name="Tanai H."/>
            <person name="Kimata M."/>
            <person name="Watanabe M."/>
            <person name="Hiraoka S."/>
            <person name="Chiba Y."/>
            <person name="Ishida S."/>
            <person name="Ono Y."/>
            <person name="Takiguchi S."/>
            <person name="Watanabe S."/>
            <person name="Yosida M."/>
            <person name="Hotuta T."/>
            <person name="Kusano J."/>
            <person name="Kanehori K."/>
            <person name="Takahashi-Fujii A."/>
            <person name="Hara H."/>
            <person name="Tanase T.-O."/>
            <person name="Nomura Y."/>
            <person name="Togiya S."/>
            <person name="Komai F."/>
            <person name="Hara R."/>
            <person name="Takeuchi K."/>
            <person name="Arita M."/>
            <person name="Imose N."/>
            <person name="Musashino K."/>
            <person name="Yuuki H."/>
            <person name="Oshima A."/>
            <person name="Sasaki N."/>
            <person name="Aotsuka S."/>
            <person name="Yoshikawa Y."/>
            <person name="Matsunawa H."/>
            <person name="Ichihara T."/>
            <person name="Shiohata N."/>
            <person name="Sano S."/>
            <person name="Moriya S."/>
            <person name="Momiyama H."/>
            <person name="Satoh N."/>
            <person name="Takami S."/>
            <person name="Terashima Y."/>
            <person name="Suzuki O."/>
            <person name="Nakagawa S."/>
            <person name="Senoh A."/>
            <person name="Mizoguchi H."/>
            <person name="Goto Y."/>
            <person name="Shimizu F."/>
            <person name="Wakebe H."/>
            <person name="Hishigaki H."/>
            <person name="Watanabe T."/>
            <person name="Sugiyama A."/>
            <person name="Takemoto M."/>
            <person name="Kawakami B."/>
            <person name="Yamazaki M."/>
            <person name="Watanabe K."/>
            <person name="Kumagai A."/>
            <person name="Itakura S."/>
            <person name="Fukuzumi Y."/>
            <person name="Fujimori Y."/>
            <person name="Komiyama M."/>
            <person name="Tashiro H."/>
            <person name="Tanigami A."/>
            <person name="Fujiwara T."/>
            <person name="Ono T."/>
            <person name="Yamada K."/>
            <person name="Fujii Y."/>
            <person name="Ozaki K."/>
            <person name="Hirao M."/>
            <person name="Ohmori Y."/>
            <person name="Kawabata A."/>
            <person name="Hikiji T."/>
            <person name="Kobatake N."/>
            <person name="Inagaki H."/>
            <person name="Ikema Y."/>
            <person name="Okamoto S."/>
            <person name="Okitani R."/>
            <person name="Kawakami T."/>
            <person name="Noguchi S."/>
            <person name="Itoh T."/>
            <person name="Shigeta K."/>
            <person name="Senba T."/>
            <person name="Matsumura K."/>
            <person name="Nakajima Y."/>
            <person name="Mizuno T."/>
            <person name="Morinaga M."/>
            <person name="Sasaki M."/>
            <person name="Togashi T."/>
            <person name="Oyama M."/>
            <person name="Hata H."/>
            <person name="Watanabe M."/>
            <person name="Komatsu T."/>
            <person name="Mizushima-Sugano J."/>
            <person name="Satoh T."/>
            <person name="Shirai Y."/>
            <person name="Takahashi Y."/>
            <person name="Nakagawa K."/>
            <person name="Okumura K."/>
            <person name="Nagase T."/>
            <person name="Nomura N."/>
            <person name="Kikuchi H."/>
            <person name="Masuho Y."/>
            <person name="Yamashita R."/>
            <person name="Nakai K."/>
            <person name="Yada T."/>
            <person name="Nakamura Y."/>
            <person name="Ohara O."/>
            <person name="Isogai T."/>
            <person name="Sugano S."/>
        </authorList>
    </citation>
    <scope>NUCLEOTIDE SEQUENCE [LARGE SCALE MRNA]</scope>
    <source>
        <tissue>Mammary gland</tissue>
    </source>
</reference>
<reference key="3">
    <citation type="journal article" date="2004" name="Genome Res.">
        <title>The status, quality, and expansion of the NIH full-length cDNA project: the Mammalian Gene Collection (MGC).</title>
        <authorList>
            <consortium name="The MGC Project Team"/>
        </authorList>
    </citation>
    <scope>NUCLEOTIDE SEQUENCE [LARGE SCALE MRNA]</scope>
    <source>
        <tissue>Pancreas</tissue>
        <tissue>Spleen</tissue>
    </source>
</reference>
<reference key="4">
    <citation type="journal article" date="1991" name="J. Biol. Chem.">
        <title>Hepsin, a cell membrane-associated protease. Characterization, tissue distribution, and gene localization.</title>
        <authorList>
            <person name="Tsuji A."/>
            <person name="Torres-Rosado A."/>
            <person name="Arai T."/>
            <person name="le Beau M.M."/>
            <person name="Lemons R.S."/>
            <person name="Chou S.H."/>
            <person name="Kurachi K."/>
        </authorList>
    </citation>
    <scope>SUBCELLULAR LOCATION</scope>
</reference>
<reference key="5">
    <citation type="journal article" date="1993" name="Proc. Natl. Acad. Sci. U.S.A.">
        <title>Hepsin, a putative cell-surface serine protease, is required for mammalian cell growth.</title>
        <authorList>
            <person name="Torres-Rosado A."/>
            <person name="O'Shea K.S."/>
            <person name="Tsuji A."/>
            <person name="Chou S.-H."/>
            <person name="Kurachi K."/>
        </authorList>
    </citation>
    <scope>FUNCTION</scope>
</reference>
<reference key="6">
    <citation type="journal article" date="2009" name="J. Proteome Res.">
        <title>Glycoproteomics analysis of human liver tissue by combination of multiple enzyme digestion and hydrazide chemistry.</title>
        <authorList>
            <person name="Chen R."/>
            <person name="Jiang X."/>
            <person name="Sun D."/>
            <person name="Han G."/>
            <person name="Wang F."/>
            <person name="Ye M."/>
            <person name="Wang L."/>
            <person name="Zou H."/>
        </authorList>
    </citation>
    <scope>GLYCOSYLATION [LARGE SCALE ANALYSIS] AT ASN-112</scope>
    <source>
        <tissue>Liver</tissue>
    </source>
</reference>
<reference key="7">
    <citation type="journal article" date="2011" name="Mol. Cancer Res.">
        <title>Proteolytic activation of pro-macrophage-stimulating protein by hepsin.</title>
        <authorList>
            <person name="Ganesan R."/>
            <person name="Kolumam G.A."/>
            <person name="Lin S.J."/>
            <person name="Xie M.H."/>
            <person name="Santell L."/>
            <person name="Wu T.D."/>
            <person name="Lazarus R.A."/>
            <person name="Chaudhuri A."/>
            <person name="Kirchhofer D."/>
        </authorList>
    </citation>
    <scope>FUNCTION</scope>
    <scope>CATALYTIC ACTIVITY</scope>
    <scope>TISSUE SPECIFICITY</scope>
</reference>
<reference key="8">
    <citation type="journal article" date="2014" name="J. Proteomics">
        <title>An enzyme assisted RP-RPLC approach for in-depth analysis of human liver phosphoproteome.</title>
        <authorList>
            <person name="Bian Y."/>
            <person name="Song C."/>
            <person name="Cheng K."/>
            <person name="Dong M."/>
            <person name="Wang F."/>
            <person name="Huang J."/>
            <person name="Sun D."/>
            <person name="Wang L."/>
            <person name="Ye M."/>
            <person name="Zou H."/>
        </authorList>
    </citation>
    <scope>IDENTIFICATION BY MASS SPECTROMETRY [LARGE SCALE ANALYSIS]</scope>
    <source>
        <tissue>Liver</tissue>
    </source>
</reference>
<reference key="9">
    <citation type="journal article" date="2014" name="J. Virol.">
        <title>TMPRSS2 and ADAM17 cleave ACE2 differentially and only proteolysis by TMPRSS2 augments entry driven by the severe acute respiratory syndrome coronavirus spike protein.</title>
        <authorList>
            <person name="Heurich A."/>
            <person name="Hofmann-Winkler H."/>
            <person name="Gierer S."/>
            <person name="Liepold T."/>
            <person name="Jahn O."/>
            <person name="Poehlmann S."/>
        </authorList>
    </citation>
    <scope>FUNCTION</scope>
</reference>
<reference key="10">
    <citation type="journal article" date="2015" name="Elife">
        <title>The serine protease hepsin mediates urinary secretion and polymerisation of Zona Pellucida domain protein uromodulin.</title>
        <authorList>
            <person name="Brunati M."/>
            <person name="Perucca S."/>
            <person name="Han L."/>
            <person name="Cattaneo A."/>
            <person name="Consolato F."/>
            <person name="Andolfo A."/>
            <person name="Schaeffer C."/>
            <person name="Olinger E."/>
            <person name="Peng J."/>
            <person name="Santambrogio S."/>
            <person name="Perrier R."/>
            <person name="Li S."/>
            <person name="Bokhove M."/>
            <person name="Bachi A."/>
            <person name="Hummler E."/>
            <person name="Devuyst O."/>
            <person name="Wu Q."/>
            <person name="Jovine L."/>
            <person name="Rampoldi L."/>
        </authorList>
    </citation>
    <scope>FUNCTION</scope>
    <scope>CATALYTIC ACTIVITY</scope>
    <scope>SUBCELLULAR LOCATION</scope>
</reference>
<reference evidence="17" key="11">
    <citation type="journal article" date="2003" name="Structure">
        <title>The structure of the extracellular region of human hepsin reveals a serine protease domain and a novel scavenger receptor cysteine-rich (SRCR) domain.</title>
        <authorList>
            <person name="Somoza J.R."/>
            <person name="Ho J.D."/>
            <person name="Luong C."/>
            <person name="Ghate M."/>
            <person name="Sprengeler P.A."/>
            <person name="Mortara K."/>
            <person name="Shrader W.D."/>
            <person name="Sperandio D."/>
            <person name="Chan H."/>
            <person name="McGrath M.E."/>
            <person name="Katz B.A."/>
        </authorList>
    </citation>
    <scope>X-RAY CRYSTALLOGRAPHY (1.75 ANGSTROMS) OF 46-417</scope>
    <scope>DISULFIDE BONDS</scope>
    <scope>ACTIVE SITE</scope>
    <scope>DOMAIN</scope>
</reference>
<reference key="12">
    <citation type="journal article" date="2005" name="Biochem. J.">
        <title>Hepatocyte growth factor is a preferred in vitro substrate for human hepsin, a membrane-anchored serine protease implicated in prostate and ovarian cancers.</title>
        <authorList>
            <person name="Herter S."/>
            <person name="Piper D.E."/>
            <person name="Aaron W."/>
            <person name="Gabriele T."/>
            <person name="Cutler G."/>
            <person name="Cao P."/>
            <person name="Bhatt A.S."/>
            <person name="Choe Y."/>
            <person name="Craik C.S."/>
            <person name="Walker N."/>
            <person name="Meininger D."/>
            <person name="Hoey T."/>
            <person name="Austin R.J."/>
        </authorList>
    </citation>
    <scope>X-RAY CRYSTALLOGRAPHY (1.55 ANGSTROMS) OF 46-417</scope>
    <scope>DISULFIDE BONDS</scope>
    <scope>FUNCTION</scope>
    <scope>CATALYTIC ACTIVITY</scope>
    <scope>ACTIVE SITE</scope>
</reference>
<organism>
    <name type="scientific">Homo sapiens</name>
    <name type="common">Human</name>
    <dbReference type="NCBI Taxonomy" id="9606"/>
    <lineage>
        <taxon>Eukaryota</taxon>
        <taxon>Metazoa</taxon>
        <taxon>Chordata</taxon>
        <taxon>Craniata</taxon>
        <taxon>Vertebrata</taxon>
        <taxon>Euteleostomi</taxon>
        <taxon>Mammalia</taxon>
        <taxon>Eutheria</taxon>
        <taxon>Euarchontoglires</taxon>
        <taxon>Primates</taxon>
        <taxon>Haplorrhini</taxon>
        <taxon>Catarrhini</taxon>
        <taxon>Hominidae</taxon>
        <taxon>Homo</taxon>
    </lineage>
</organism>
<proteinExistence type="evidence at protein level"/>
<comment type="function">
    <text evidence="4 7 8 9 10">Serine protease that cleaves extracellular substrates, and contributes to the proteolytic processing of growth factors, such as HGF and MST1/HGFL (PubMed:15839837, PubMed:21875933). Plays a role in cell growth and maintenance of cell morphology (PubMed:21875933, PubMed:8346233). Plays a role in the proteolytic processing of ACE2 (PubMed:24227843). Mediates the proteolytic cleavage of urinary UMOD that is required for UMOD polymerization (PubMed:26673890).</text>
</comment>
<comment type="catalytic activity">
    <reaction evidence="4 7 14">
        <text>Cleavage after basic amino-acid residues, with Arg strongly preferred to Lys.</text>
        <dbReference type="EC" id="3.4.21.106"/>
    </reaction>
</comment>
<comment type="interaction">
    <interactant intactId="EBI-12816745">
        <id>P05981</id>
    </interactant>
    <interactant intactId="EBI-749464">
        <id>Q12983</id>
        <label>BNIP3</label>
    </interactant>
    <organismsDiffer>false</organismsDiffer>
    <experiments>3</experiments>
</comment>
<comment type="interaction">
    <interactant intactId="EBI-12816745">
        <id>P05981</id>
    </interactant>
    <interactant intactId="EBI-10197617">
        <id>P11686</id>
        <label>SFTPC</label>
    </interactant>
    <organismsDiffer>false</organismsDiffer>
    <experiments>3</experiments>
</comment>
<comment type="interaction">
    <interactant intactId="EBI-12816745">
        <id>P05981</id>
    </interactant>
    <interactant intactId="EBI-10179682">
        <id>O00526</id>
        <label>UPK2</label>
    </interactant>
    <organismsDiffer>false</organismsDiffer>
    <experiments>3</experiments>
</comment>
<comment type="subcellular location">
    <subcellularLocation>
        <location evidence="5">Cell membrane</location>
        <topology evidence="5">Single-pass type II membrane protein</topology>
    </subcellularLocation>
    <subcellularLocation>
        <location evidence="9">Apical cell membrane</location>
        <topology evidence="11">Single-pass type II membrane protein</topology>
    </subcellularLocation>
</comment>
<comment type="tissue specificity">
    <text evidence="7">Detected in liver and kidney.</text>
</comment>
<comment type="similarity">
    <text evidence="2">Belongs to the peptidase S1 family.</text>
</comment>
<feature type="chain" id="PRO_0000027841" description="Serine protease hepsin non-catalytic chain" evidence="1">
    <location>
        <begin position="1"/>
        <end position="162"/>
    </location>
</feature>
<feature type="chain" id="PRO_0000027842" description="Serine protease hepsin catalytic chain" evidence="1">
    <location>
        <begin position="163"/>
        <end position="417"/>
    </location>
</feature>
<feature type="topological domain" description="Cytoplasmic" evidence="1">
    <location>
        <begin position="1"/>
        <end position="23"/>
    </location>
</feature>
<feature type="transmembrane region" description="Helical; Signal-anchor for type II membrane protein" evidence="1">
    <location>
        <begin position="24"/>
        <end position="44"/>
    </location>
</feature>
<feature type="topological domain" description="Extracellular" evidence="1">
    <location>
        <begin position="45"/>
        <end position="417"/>
    </location>
</feature>
<feature type="domain" description="SRCR">
    <location>
        <begin position="54"/>
        <end position="151"/>
    </location>
</feature>
<feature type="domain" description="Peptidase S1" evidence="2">
    <location>
        <begin position="163"/>
        <end position="405"/>
    </location>
</feature>
<feature type="active site" description="Charge relay system" evidence="12 13">
    <location>
        <position position="203"/>
    </location>
</feature>
<feature type="active site" description="Charge relay system" evidence="12 13">
    <location>
        <position position="257"/>
    </location>
</feature>
<feature type="active site" description="Charge relay system" evidence="12 13">
    <location>
        <position position="353"/>
    </location>
</feature>
<feature type="glycosylation site" description="N-linked (GlcNAc...) asparagine" evidence="6">
    <location>
        <position position="112"/>
    </location>
</feature>
<feature type="disulfide bond" evidence="2 3 4 15 16 17 18">
    <location>
        <begin position="77"/>
        <end position="140"/>
    </location>
</feature>
<feature type="disulfide bond" evidence="2 3 4 15 16 17 18">
    <location>
        <begin position="90"/>
        <end position="150"/>
    </location>
</feature>
<feature type="disulfide bond" evidence="2 3 4 15 16 17 18">
    <location>
        <begin position="119"/>
        <end position="138"/>
    </location>
</feature>
<feature type="disulfide bond" description="Interchain (between non-catalytic and catalytic chains)" evidence="2 3 4 15 16 17 18">
    <location>
        <begin position="153"/>
        <end position="277"/>
    </location>
</feature>
<feature type="disulfide bond" evidence="2 3 4 15 16 17 18">
    <location>
        <begin position="188"/>
        <end position="204"/>
    </location>
</feature>
<feature type="disulfide bond" evidence="2 3 4 15 16 17 18">
    <location>
        <begin position="291"/>
        <end position="359"/>
    </location>
</feature>
<feature type="disulfide bond" evidence="2 3 4 15 16 17 18">
    <location>
        <begin position="322"/>
        <end position="338"/>
    </location>
</feature>
<feature type="disulfide bond" evidence="2 3 4 15 16 17 18">
    <location>
        <begin position="349"/>
        <end position="381"/>
    </location>
</feature>
<feature type="strand" evidence="20">
    <location>
        <begin position="53"/>
        <end position="56"/>
    </location>
</feature>
<feature type="turn" evidence="20">
    <location>
        <begin position="58"/>
        <end position="60"/>
    </location>
</feature>
<feature type="strand" evidence="20">
    <location>
        <begin position="62"/>
        <end position="67"/>
    </location>
</feature>
<feature type="turn" evidence="20">
    <location>
        <begin position="68"/>
        <end position="71"/>
    </location>
</feature>
<feature type="strand" evidence="20">
    <location>
        <begin position="72"/>
        <end position="77"/>
    </location>
</feature>
<feature type="helix" evidence="20">
    <location>
        <begin position="82"/>
        <end position="93"/>
    </location>
</feature>
<feature type="strand" evidence="20">
    <location>
        <begin position="98"/>
        <end position="105"/>
    </location>
</feature>
<feature type="helix" evidence="20">
    <location>
        <begin position="106"/>
        <end position="109"/>
    </location>
</feature>
<feature type="strand" evidence="20">
    <location>
        <begin position="116"/>
        <end position="120"/>
    </location>
</feature>
<feature type="turn" evidence="20">
    <location>
        <begin position="122"/>
        <end position="124"/>
    </location>
</feature>
<feature type="helix" evidence="20">
    <location>
        <begin position="125"/>
        <end position="127"/>
    </location>
</feature>
<feature type="helix" evidence="20">
    <location>
        <begin position="131"/>
        <end position="134"/>
    </location>
</feature>
<feature type="strand" evidence="20">
    <location>
        <begin position="135"/>
        <end position="138"/>
    </location>
</feature>
<feature type="strand" evidence="20">
    <location>
        <begin position="144"/>
        <end position="150"/>
    </location>
</feature>
<feature type="strand" evidence="20">
    <location>
        <begin position="177"/>
        <end position="182"/>
    </location>
</feature>
<feature type="strand" evidence="20">
    <location>
        <begin position="185"/>
        <end position="200"/>
    </location>
</feature>
<feature type="helix" evidence="20">
    <location>
        <begin position="202"/>
        <end position="204"/>
    </location>
</feature>
<feature type="helix" evidence="20">
    <location>
        <begin position="207"/>
        <end position="209"/>
    </location>
</feature>
<feature type="helix" evidence="20">
    <location>
        <begin position="212"/>
        <end position="214"/>
    </location>
</feature>
<feature type="strand" evidence="20">
    <location>
        <begin position="215"/>
        <end position="220"/>
    </location>
</feature>
<feature type="strand" evidence="20">
    <location>
        <begin position="229"/>
        <end position="232"/>
    </location>
</feature>
<feature type="strand" evidence="20">
    <location>
        <begin position="234"/>
        <end position="240"/>
    </location>
</feature>
<feature type="helix" evidence="20">
    <location>
        <begin position="244"/>
        <end position="246"/>
    </location>
</feature>
<feature type="strand" evidence="20">
    <location>
        <begin position="259"/>
        <end position="265"/>
    </location>
</feature>
<feature type="strand" evidence="20">
    <location>
        <begin position="290"/>
        <end position="300"/>
    </location>
</feature>
<feature type="strand" evidence="20">
    <location>
        <begin position="310"/>
        <end position="317"/>
    </location>
</feature>
<feature type="helix" evidence="20">
    <location>
        <begin position="319"/>
        <end position="322"/>
    </location>
</feature>
<feature type="turn" evidence="20">
    <location>
        <begin position="325"/>
        <end position="330"/>
    </location>
</feature>
<feature type="strand" evidence="20">
    <location>
        <begin position="336"/>
        <end position="340"/>
    </location>
</feature>
<feature type="strand" evidence="19">
    <location>
        <begin position="345"/>
        <end position="347"/>
    </location>
</feature>
<feature type="turn" evidence="21">
    <location>
        <begin position="350"/>
        <end position="354"/>
    </location>
</feature>
<feature type="strand" evidence="20">
    <location>
        <begin position="356"/>
        <end position="361"/>
    </location>
</feature>
<feature type="strand" evidence="20">
    <location>
        <begin position="368"/>
        <end position="382"/>
    </location>
</feature>
<feature type="strand" evidence="20">
    <location>
        <begin position="388"/>
        <end position="392"/>
    </location>
</feature>
<feature type="helix" evidence="20">
    <location>
        <begin position="393"/>
        <end position="396"/>
    </location>
</feature>
<feature type="helix" evidence="20">
    <location>
        <begin position="397"/>
        <end position="406"/>
    </location>
</feature>
<feature type="turn" evidence="20">
    <location>
        <begin position="407"/>
        <end position="409"/>
    </location>
</feature>
<feature type="strand" evidence="20">
    <location>
        <begin position="412"/>
        <end position="416"/>
    </location>
</feature>
<name>HEPS_HUMAN</name>
<keyword id="KW-0002">3D-structure</keyword>
<keyword id="KW-1003">Cell membrane</keyword>
<keyword id="KW-1015">Disulfide bond</keyword>
<keyword id="KW-0325">Glycoprotein</keyword>
<keyword id="KW-0378">Hydrolase</keyword>
<keyword id="KW-0472">Membrane</keyword>
<keyword id="KW-0645">Protease</keyword>
<keyword id="KW-1267">Proteomics identification</keyword>
<keyword id="KW-1185">Reference proteome</keyword>
<keyword id="KW-0720">Serine protease</keyword>
<keyword id="KW-0735">Signal-anchor</keyword>
<keyword id="KW-0812">Transmembrane</keyword>
<keyword id="KW-1133">Transmembrane helix</keyword>
<dbReference type="EC" id="3.4.21.106" evidence="4 7 14"/>
<dbReference type="EMBL" id="M18930">
    <property type="protein sequence ID" value="AAA36013.1"/>
    <property type="molecule type" value="mRNA"/>
</dbReference>
<dbReference type="EMBL" id="X07732">
    <property type="protein sequence ID" value="CAA30558.1"/>
    <property type="molecule type" value="mRNA"/>
</dbReference>
<dbReference type="EMBL" id="X07002">
    <property type="protein sequence ID" value="CAA30058.1"/>
    <property type="molecule type" value="mRNA"/>
</dbReference>
<dbReference type="EMBL" id="AK315655">
    <property type="protein sequence ID" value="BAG38021.1"/>
    <property type="molecule type" value="mRNA"/>
</dbReference>
<dbReference type="EMBL" id="BC025716">
    <property type="protein sequence ID" value="AAH25716.1"/>
    <property type="molecule type" value="mRNA"/>
</dbReference>
<dbReference type="CCDS" id="CCDS32993.1"/>
<dbReference type="PIR" id="S00845">
    <property type="entry name" value="S00845"/>
</dbReference>
<dbReference type="RefSeq" id="NP_001362370.1">
    <property type="nucleotide sequence ID" value="NM_001375441.3"/>
</dbReference>
<dbReference type="RefSeq" id="NP_001371062.1">
    <property type="nucleotide sequence ID" value="NM_001384133.1"/>
</dbReference>
<dbReference type="RefSeq" id="NP_002142.1">
    <property type="nucleotide sequence ID" value="NM_002151.5"/>
</dbReference>
<dbReference type="RefSeq" id="NP_892028.1">
    <property type="nucleotide sequence ID" value="NM_182983.5"/>
</dbReference>
<dbReference type="RefSeq" id="XP_005258895.2">
    <property type="nucleotide sequence ID" value="XM_005258838.4"/>
</dbReference>
<dbReference type="RefSeq" id="XP_006723244.2">
    <property type="nucleotide sequence ID" value="XM_006723181.3"/>
</dbReference>
<dbReference type="RefSeq" id="XP_016882220.1">
    <property type="nucleotide sequence ID" value="XM_017026731.2"/>
</dbReference>
<dbReference type="RefSeq" id="XP_047294697.1">
    <property type="nucleotide sequence ID" value="XM_047438741.1"/>
</dbReference>
<dbReference type="RefSeq" id="XP_054176782.1">
    <property type="nucleotide sequence ID" value="XM_054320807.1"/>
</dbReference>
<dbReference type="PDB" id="1O5E">
    <property type="method" value="X-ray"/>
    <property type="resolution" value="1.75 A"/>
    <property type="chains" value="H=163-417, L=46-159"/>
</dbReference>
<dbReference type="PDB" id="1O5F">
    <property type="method" value="X-ray"/>
    <property type="resolution" value="1.78 A"/>
    <property type="chains" value="H=163-417, L=46-159"/>
</dbReference>
<dbReference type="PDB" id="1P57">
    <property type="method" value="X-ray"/>
    <property type="resolution" value="1.75 A"/>
    <property type="chains" value="A=46-159, B=163-417"/>
</dbReference>
<dbReference type="PDB" id="1Z8G">
    <property type="method" value="X-ray"/>
    <property type="resolution" value="1.55 A"/>
    <property type="chains" value="A=46-417"/>
</dbReference>
<dbReference type="PDB" id="3T2N">
    <property type="method" value="X-ray"/>
    <property type="resolution" value="2.55 A"/>
    <property type="chains" value="A/B=46-417"/>
</dbReference>
<dbReference type="PDB" id="5CE1">
    <property type="method" value="X-ray"/>
    <property type="resolution" value="2.50 A"/>
    <property type="chains" value="A=46-417"/>
</dbReference>
<dbReference type="PDBsum" id="1O5E"/>
<dbReference type="PDBsum" id="1O5F"/>
<dbReference type="PDBsum" id="1P57"/>
<dbReference type="PDBsum" id="1Z8G"/>
<dbReference type="PDBsum" id="3T2N"/>
<dbReference type="PDBsum" id="5CE1"/>
<dbReference type="SMR" id="P05981"/>
<dbReference type="BioGRID" id="109486">
    <property type="interactions" value="116"/>
</dbReference>
<dbReference type="FunCoup" id="P05981">
    <property type="interactions" value="21"/>
</dbReference>
<dbReference type="IntAct" id="P05981">
    <property type="interactions" value="92"/>
</dbReference>
<dbReference type="STRING" id="9606.ENSP00000262626"/>
<dbReference type="BindingDB" id="P05981"/>
<dbReference type="ChEMBL" id="CHEMBL2079849"/>
<dbReference type="DrugBank" id="DB03865">
    <property type="generic name" value="6-Chloro-2-(2-Hydroxy-Biphenyl-3-Yl)-1h-Indole-5-Carboxamidine"/>
</dbReference>
<dbReference type="DrugBank" id="DB00522">
    <property type="generic name" value="Bentiromide"/>
</dbReference>
<dbReference type="DrugBank" id="DB03297">
    <property type="generic name" value="Benzylsulfonic acid"/>
</dbReference>
<dbReference type="DrugBank" id="DB03643">
    <property type="generic name" value="CRA_1144"/>
</dbReference>
<dbReference type="DrugCentral" id="P05981"/>
<dbReference type="MEROPS" id="S01.224"/>
<dbReference type="TCDB" id="8.A.131.1.12">
    <property type="family name" value="the transmembrane protease serine 3 (tmprss3) family"/>
</dbReference>
<dbReference type="GlyCosmos" id="P05981">
    <property type="glycosylation" value="1 site, No reported glycans"/>
</dbReference>
<dbReference type="GlyGen" id="P05981">
    <property type="glycosylation" value="1 site, 13 N-linked glycans (1 site)"/>
</dbReference>
<dbReference type="iPTMnet" id="P05981"/>
<dbReference type="PhosphoSitePlus" id="P05981"/>
<dbReference type="SwissPalm" id="P05981"/>
<dbReference type="BioMuta" id="HPN"/>
<dbReference type="DMDM" id="123057"/>
<dbReference type="jPOST" id="P05981"/>
<dbReference type="MassIVE" id="P05981"/>
<dbReference type="PaxDb" id="9606-ENSP00000262626"/>
<dbReference type="PeptideAtlas" id="P05981"/>
<dbReference type="ProteomicsDB" id="51865"/>
<dbReference type="ABCD" id="P05981">
    <property type="antibodies" value="2 sequenced antibodies"/>
</dbReference>
<dbReference type="Antibodypedia" id="1718">
    <property type="antibodies" value="217 antibodies from 33 providers"/>
</dbReference>
<dbReference type="DNASU" id="3249"/>
<dbReference type="Ensembl" id="ENST00000262626.6">
    <property type="protein sequence ID" value="ENSP00000262626.2"/>
    <property type="gene ID" value="ENSG00000105707.15"/>
</dbReference>
<dbReference type="Ensembl" id="ENST00000392226.5">
    <property type="protein sequence ID" value="ENSP00000376060.1"/>
    <property type="gene ID" value="ENSG00000105707.15"/>
</dbReference>
<dbReference type="Ensembl" id="ENST00000672452.2">
    <property type="protein sequence ID" value="ENSP00000500664.1"/>
    <property type="gene ID" value="ENSG00000105707.15"/>
</dbReference>
<dbReference type="Ensembl" id="ENST00000673426.1">
    <property type="protein sequence ID" value="ENSP00000500909.1"/>
    <property type="gene ID" value="ENSG00000105707.15"/>
</dbReference>
<dbReference type="GeneID" id="3249"/>
<dbReference type="KEGG" id="hsa:3249"/>
<dbReference type="MANE-Select" id="ENST00000672452.2">
    <property type="protein sequence ID" value="ENSP00000500664.1"/>
    <property type="RefSeq nucleotide sequence ID" value="NM_001384133.1"/>
    <property type="RefSeq protein sequence ID" value="NP_001371062.1"/>
</dbReference>
<dbReference type="UCSC" id="uc002nxq.3">
    <property type="organism name" value="human"/>
</dbReference>
<dbReference type="AGR" id="HGNC:5155"/>
<dbReference type="CTD" id="3249"/>
<dbReference type="DisGeNET" id="3249"/>
<dbReference type="GeneCards" id="HPN"/>
<dbReference type="HGNC" id="HGNC:5155">
    <property type="gene designation" value="HPN"/>
</dbReference>
<dbReference type="HPA" id="ENSG00000105707">
    <property type="expression patterns" value="Tissue enhanced (kidney, liver, pancreas)"/>
</dbReference>
<dbReference type="MalaCards" id="HPN"/>
<dbReference type="MIM" id="142440">
    <property type="type" value="gene"/>
</dbReference>
<dbReference type="neXtProt" id="NX_P05981"/>
<dbReference type="OpenTargets" id="ENSG00000105707"/>
<dbReference type="PharmGKB" id="PA29425"/>
<dbReference type="VEuPathDB" id="HostDB:ENSG00000105707"/>
<dbReference type="eggNOG" id="KOG3627">
    <property type="taxonomic scope" value="Eukaryota"/>
</dbReference>
<dbReference type="GeneTree" id="ENSGT00940000159697"/>
<dbReference type="HOGENOM" id="CLU_006842_19_2_1"/>
<dbReference type="InParanoid" id="P05981"/>
<dbReference type="OMA" id="WTLPKVM"/>
<dbReference type="OrthoDB" id="5979691at2759"/>
<dbReference type="PAN-GO" id="P05981">
    <property type="GO annotations" value="2 GO annotations based on evolutionary models"/>
</dbReference>
<dbReference type="PhylomeDB" id="P05981"/>
<dbReference type="TreeFam" id="TF351678"/>
<dbReference type="BRENDA" id="3.4.21.106">
    <property type="organism ID" value="2681"/>
</dbReference>
<dbReference type="PathwayCommons" id="P05981"/>
<dbReference type="Reactome" id="R-HSA-6806942">
    <property type="pathway name" value="MET Receptor Activation"/>
</dbReference>
<dbReference type="Reactome" id="R-HSA-8852405">
    <property type="pathway name" value="Signaling by MST1"/>
</dbReference>
<dbReference type="SignaLink" id="P05981"/>
<dbReference type="SIGNOR" id="P05981"/>
<dbReference type="BioGRID-ORCS" id="3249">
    <property type="hits" value="28 hits in 1155 CRISPR screens"/>
</dbReference>
<dbReference type="ChiTaRS" id="HPN">
    <property type="organism name" value="human"/>
</dbReference>
<dbReference type="EvolutionaryTrace" id="P05981"/>
<dbReference type="GeneWiki" id="HPN_(gene)"/>
<dbReference type="GenomeRNAi" id="3249"/>
<dbReference type="Pharos" id="P05981">
    <property type="development level" value="Tchem"/>
</dbReference>
<dbReference type="PRO" id="PR:P05981"/>
<dbReference type="Proteomes" id="UP000005640">
    <property type="component" value="Chromosome 19"/>
</dbReference>
<dbReference type="RNAct" id="P05981">
    <property type="molecule type" value="protein"/>
</dbReference>
<dbReference type="Bgee" id="ENSG00000105707">
    <property type="expression patterns" value="Expressed in right lobe of liver and 112 other cell types or tissues"/>
</dbReference>
<dbReference type="ExpressionAtlas" id="P05981">
    <property type="expression patterns" value="baseline and differential"/>
</dbReference>
<dbReference type="GO" id="GO:0016324">
    <property type="term" value="C:apical plasma membrane"/>
    <property type="evidence" value="ECO:0007669"/>
    <property type="project" value="UniProtKB-SubCell"/>
</dbReference>
<dbReference type="GO" id="GO:0009986">
    <property type="term" value="C:cell surface"/>
    <property type="evidence" value="ECO:0000314"/>
    <property type="project" value="UniProtKB"/>
</dbReference>
<dbReference type="GO" id="GO:0005911">
    <property type="term" value="C:cell-cell junction"/>
    <property type="evidence" value="ECO:0000250"/>
    <property type="project" value="UniProtKB"/>
</dbReference>
<dbReference type="GO" id="GO:0005789">
    <property type="term" value="C:endoplasmic reticulum membrane"/>
    <property type="evidence" value="ECO:0000314"/>
    <property type="project" value="UniProtKB"/>
</dbReference>
<dbReference type="GO" id="GO:0070062">
    <property type="term" value="C:extracellular exosome"/>
    <property type="evidence" value="ECO:0007005"/>
    <property type="project" value="UniProtKB"/>
</dbReference>
<dbReference type="GO" id="GO:0016020">
    <property type="term" value="C:membrane"/>
    <property type="evidence" value="ECO:0000314"/>
    <property type="project" value="UniProtKB"/>
</dbReference>
<dbReference type="GO" id="GO:0043025">
    <property type="term" value="C:neuronal cell body"/>
    <property type="evidence" value="ECO:0000250"/>
    <property type="project" value="UniProtKB"/>
</dbReference>
<dbReference type="GO" id="GO:0005886">
    <property type="term" value="C:plasma membrane"/>
    <property type="evidence" value="ECO:0000314"/>
    <property type="project" value="UniProtKB"/>
</dbReference>
<dbReference type="GO" id="GO:0008233">
    <property type="term" value="F:peptidase activity"/>
    <property type="evidence" value="ECO:0000314"/>
    <property type="project" value="UniProtKB"/>
</dbReference>
<dbReference type="GO" id="GO:0004252">
    <property type="term" value="F:serine-type endopeptidase activity"/>
    <property type="evidence" value="ECO:0000314"/>
    <property type="project" value="UniProtKB"/>
</dbReference>
<dbReference type="GO" id="GO:0070008">
    <property type="term" value="F:serine-type exopeptidase activity"/>
    <property type="evidence" value="ECO:0007669"/>
    <property type="project" value="InterPro"/>
</dbReference>
<dbReference type="GO" id="GO:0008236">
    <property type="term" value="F:serine-type peptidase activity"/>
    <property type="evidence" value="ECO:0000314"/>
    <property type="project" value="UniProtKB"/>
</dbReference>
<dbReference type="GO" id="GO:0034769">
    <property type="term" value="P:basement membrane disassembly"/>
    <property type="evidence" value="ECO:0000314"/>
    <property type="project" value="UniProtKB"/>
</dbReference>
<dbReference type="GO" id="GO:0090103">
    <property type="term" value="P:cochlea morphogenesis"/>
    <property type="evidence" value="ECO:0000250"/>
    <property type="project" value="UniProtKB"/>
</dbReference>
<dbReference type="GO" id="GO:0050910">
    <property type="term" value="P:detection of mechanical stimulus involved in sensory perception of sound"/>
    <property type="evidence" value="ECO:0000250"/>
    <property type="project" value="UniProtKB"/>
</dbReference>
<dbReference type="GO" id="GO:0043066">
    <property type="term" value="P:negative regulation of apoptotic process"/>
    <property type="evidence" value="ECO:0000314"/>
    <property type="project" value="UniProtKB"/>
</dbReference>
<dbReference type="GO" id="GO:0050680">
    <property type="term" value="P:negative regulation of epithelial cell proliferation"/>
    <property type="evidence" value="ECO:0000314"/>
    <property type="project" value="UniProtKB"/>
</dbReference>
<dbReference type="GO" id="GO:0010719">
    <property type="term" value="P:negative regulation of epithelial to mesenchymal transition"/>
    <property type="evidence" value="ECO:0000314"/>
    <property type="project" value="UniProtKB"/>
</dbReference>
<dbReference type="GO" id="GO:0097195">
    <property type="term" value="P:pilomotor reflex"/>
    <property type="evidence" value="ECO:0000250"/>
    <property type="project" value="UniProtKB"/>
</dbReference>
<dbReference type="GO" id="GO:0043923">
    <property type="term" value="P:positive regulation by host of viral transcription"/>
    <property type="evidence" value="ECO:0000314"/>
    <property type="project" value="UniProtKB"/>
</dbReference>
<dbReference type="GO" id="GO:0030307">
    <property type="term" value="P:positive regulation of cell growth"/>
    <property type="evidence" value="ECO:0000315"/>
    <property type="project" value="UniProtKB"/>
</dbReference>
<dbReference type="GO" id="GO:0010628">
    <property type="term" value="P:positive regulation of gene expression"/>
    <property type="evidence" value="ECO:0000250"/>
    <property type="project" value="UniProtKB"/>
</dbReference>
<dbReference type="GO" id="GO:2000347">
    <property type="term" value="P:positive regulation of hepatocyte proliferation"/>
    <property type="evidence" value="ECO:0000314"/>
    <property type="project" value="UniProtKB"/>
</dbReference>
<dbReference type="GO" id="GO:0010756">
    <property type="term" value="P:positive regulation of plasminogen activation"/>
    <property type="evidence" value="ECO:0000314"/>
    <property type="project" value="UniProtKB"/>
</dbReference>
<dbReference type="GO" id="GO:2000611">
    <property type="term" value="P:positive regulation of thyroid hormone generation"/>
    <property type="evidence" value="ECO:0000250"/>
    <property type="project" value="UniProtKB"/>
</dbReference>
<dbReference type="GO" id="GO:0071805">
    <property type="term" value="P:potassium ion transmembrane transport"/>
    <property type="evidence" value="ECO:0000250"/>
    <property type="project" value="UniProtKB"/>
</dbReference>
<dbReference type="GO" id="GO:0006508">
    <property type="term" value="P:proteolysis"/>
    <property type="evidence" value="ECO:0000314"/>
    <property type="project" value="UniProtKB"/>
</dbReference>
<dbReference type="GO" id="GO:0008360">
    <property type="term" value="P:regulation of cell shape"/>
    <property type="evidence" value="ECO:0000315"/>
    <property type="project" value="UniProtKB"/>
</dbReference>
<dbReference type="GO" id="GO:0097066">
    <property type="term" value="P:response to thyroid hormone"/>
    <property type="evidence" value="ECO:0000250"/>
    <property type="project" value="UniProtKB"/>
</dbReference>
<dbReference type="CDD" id="cd00190">
    <property type="entry name" value="Tryp_SPc"/>
    <property type="match status" value="1"/>
</dbReference>
<dbReference type="FunFam" id="2.40.10.10:FF:000109">
    <property type="entry name" value="Hepsin"/>
    <property type="match status" value="1"/>
</dbReference>
<dbReference type="FunFam" id="3.10.250.10:FF:000020">
    <property type="entry name" value="serine protease hepsin"/>
    <property type="match status" value="1"/>
</dbReference>
<dbReference type="FunFam" id="2.40.10.10:FF:000068">
    <property type="entry name" value="transmembrane protease serine 2"/>
    <property type="match status" value="1"/>
</dbReference>
<dbReference type="Gene3D" id="3.10.250.10">
    <property type="entry name" value="SRCR-like domain"/>
    <property type="match status" value="1"/>
</dbReference>
<dbReference type="Gene3D" id="2.40.10.10">
    <property type="entry name" value="Trypsin-like serine proteases"/>
    <property type="match status" value="1"/>
</dbReference>
<dbReference type="InterPro" id="IPR015352">
    <property type="entry name" value="Hepsin-SRCR_dom"/>
</dbReference>
<dbReference type="InterPro" id="IPR009003">
    <property type="entry name" value="Peptidase_S1_PA"/>
</dbReference>
<dbReference type="InterPro" id="IPR043504">
    <property type="entry name" value="Peptidase_S1_PA_chymotrypsin"/>
</dbReference>
<dbReference type="InterPro" id="IPR001314">
    <property type="entry name" value="Peptidase_S1A"/>
</dbReference>
<dbReference type="InterPro" id="IPR001190">
    <property type="entry name" value="SRCR"/>
</dbReference>
<dbReference type="InterPro" id="IPR036772">
    <property type="entry name" value="SRCR-like_dom_sf"/>
</dbReference>
<dbReference type="InterPro" id="IPR001254">
    <property type="entry name" value="Trypsin_dom"/>
</dbReference>
<dbReference type="InterPro" id="IPR018114">
    <property type="entry name" value="TRYPSIN_HIS"/>
</dbReference>
<dbReference type="InterPro" id="IPR033116">
    <property type="entry name" value="TRYPSIN_SER"/>
</dbReference>
<dbReference type="PANTHER" id="PTHR24252">
    <property type="entry name" value="ACROSIN-RELATED"/>
    <property type="match status" value="1"/>
</dbReference>
<dbReference type="PANTHER" id="PTHR24252:SF7">
    <property type="entry name" value="HYALIN"/>
    <property type="match status" value="1"/>
</dbReference>
<dbReference type="Pfam" id="PF09272">
    <property type="entry name" value="Hepsin-SRCR"/>
    <property type="match status" value="1"/>
</dbReference>
<dbReference type="Pfam" id="PF00089">
    <property type="entry name" value="Trypsin"/>
    <property type="match status" value="1"/>
</dbReference>
<dbReference type="PRINTS" id="PR00722">
    <property type="entry name" value="CHYMOTRYPSIN"/>
</dbReference>
<dbReference type="SMART" id="SM00202">
    <property type="entry name" value="SR"/>
    <property type="match status" value="1"/>
</dbReference>
<dbReference type="SMART" id="SM00020">
    <property type="entry name" value="Tryp_SPc"/>
    <property type="match status" value="1"/>
</dbReference>
<dbReference type="SUPFAM" id="SSF56487">
    <property type="entry name" value="SRCR-like"/>
    <property type="match status" value="1"/>
</dbReference>
<dbReference type="SUPFAM" id="SSF50494">
    <property type="entry name" value="Trypsin-like serine proteases"/>
    <property type="match status" value="1"/>
</dbReference>
<dbReference type="PROSITE" id="PS50240">
    <property type="entry name" value="TRYPSIN_DOM"/>
    <property type="match status" value="1"/>
</dbReference>
<dbReference type="PROSITE" id="PS00134">
    <property type="entry name" value="TRYPSIN_HIS"/>
    <property type="match status" value="1"/>
</dbReference>
<dbReference type="PROSITE" id="PS00135">
    <property type="entry name" value="TRYPSIN_SER"/>
    <property type="match status" value="1"/>
</dbReference>
<evidence type="ECO:0000255" key="1"/>
<evidence type="ECO:0000255" key="2">
    <source>
        <dbReference type="PROSITE-ProRule" id="PRU00274"/>
    </source>
</evidence>
<evidence type="ECO:0000269" key="3">
    <source>
    </source>
</evidence>
<evidence type="ECO:0000269" key="4">
    <source>
    </source>
</evidence>
<evidence type="ECO:0000269" key="5">
    <source>
    </source>
</evidence>
<evidence type="ECO:0000269" key="6">
    <source>
    </source>
</evidence>
<evidence type="ECO:0000269" key="7">
    <source>
    </source>
</evidence>
<evidence type="ECO:0000269" key="8">
    <source>
    </source>
</evidence>
<evidence type="ECO:0000269" key="9">
    <source>
    </source>
</evidence>
<evidence type="ECO:0000269" key="10">
    <source>
    </source>
</evidence>
<evidence type="ECO:0000305" key="11"/>
<evidence type="ECO:0000305" key="12">
    <source>
    </source>
</evidence>
<evidence type="ECO:0000305" key="13">
    <source>
    </source>
</evidence>
<evidence type="ECO:0000305" key="14">
    <source>
    </source>
</evidence>
<evidence type="ECO:0007744" key="15">
    <source>
        <dbReference type="PDB" id="1O5E"/>
    </source>
</evidence>
<evidence type="ECO:0007744" key="16">
    <source>
        <dbReference type="PDB" id="1O5F"/>
    </source>
</evidence>
<evidence type="ECO:0007744" key="17">
    <source>
        <dbReference type="PDB" id="1P57"/>
    </source>
</evidence>
<evidence type="ECO:0007744" key="18">
    <source>
        <dbReference type="PDB" id="1Z8G"/>
    </source>
</evidence>
<evidence type="ECO:0007829" key="19">
    <source>
        <dbReference type="PDB" id="1O5E"/>
    </source>
</evidence>
<evidence type="ECO:0007829" key="20">
    <source>
        <dbReference type="PDB" id="1Z8G"/>
    </source>
</evidence>
<evidence type="ECO:0007829" key="21">
    <source>
        <dbReference type="PDB" id="5CE1"/>
    </source>
</evidence>
<sequence>MAQKEGGRTVPCCSRPKVAALTAGTLLLLTAIGAASWAIVAVLLRSDQEPLYPVQVSSADARLMVFDKTEGTWRLLCSSRSNARVAGLSCEEMGFLRALTHSELDVRTAGANGTSGFFCVDEGRLPHTQRLLEVISVCDCPRGRFLAAICQDCGRRKLPVDRIVGGRDTSLGRWPWQVSLRYDGAHLCGGSLLSGDWVLTAAHCFPERNRVLSRWRVFAGAVAQASPHGLQLGVQAVVYHGGYLPFRDPNSEENSNDIALVHLSSPLPLTEYIQPVCLPAAGQALVDGKICTVTGWGNTQYYGQQAGVLQEARVPIISNDVCNGADFYGNQIKPKMFCAGYPEGGIDACQGDSGGPFVCEDSISRTPRWRLCGIVSWGTGCALAQKPGVYTKVSDFREWIFQAIKTHSEASGMVTQL</sequence>
<protein>
    <recommendedName>
        <fullName>Serine protease hepsin</fullName>
        <ecNumber evidence="4 7 14">3.4.21.106</ecNumber>
    </recommendedName>
    <alternativeName>
        <fullName>Transmembrane protease serine 1</fullName>
    </alternativeName>
    <component>
        <recommendedName>
            <fullName>Serine protease hepsin non-catalytic chain</fullName>
        </recommendedName>
    </component>
    <component>
        <recommendedName>
            <fullName>Serine protease hepsin catalytic chain</fullName>
        </recommendedName>
    </component>
</protein>
<gene>
    <name type="primary">HPN</name>
    <name type="synonym">TMPRSS1</name>
</gene>